<dbReference type="EC" id="3.4.-.-"/>
<dbReference type="EMBL" id="CH445333">
    <property type="protein sequence ID" value="EAT86421.2"/>
    <property type="molecule type" value="Genomic_DNA"/>
</dbReference>
<dbReference type="RefSeq" id="XP_001796957.1">
    <property type="nucleotide sequence ID" value="XM_001796905.1"/>
</dbReference>
<dbReference type="SMR" id="Q0UNS4"/>
<dbReference type="EnsemblFungi" id="SNOT_06590">
    <property type="protein sequence ID" value="SNOT_06590"/>
    <property type="gene ID" value="SNOG_06590"/>
</dbReference>
<dbReference type="GeneID" id="5973836"/>
<dbReference type="KEGG" id="pno:SNOG_06590"/>
<dbReference type="VEuPathDB" id="FungiDB:JI435_065900"/>
<dbReference type="eggNOG" id="ENOG502R701">
    <property type="taxonomic scope" value="Eukaryota"/>
</dbReference>
<dbReference type="HOGENOM" id="CLU_047420_0_0_1"/>
<dbReference type="InParanoid" id="Q0UNS4"/>
<dbReference type="Proteomes" id="UP000001055">
    <property type="component" value="Unassembled WGS sequence"/>
</dbReference>
<dbReference type="GO" id="GO:0005576">
    <property type="term" value="C:extracellular region"/>
    <property type="evidence" value="ECO:0007669"/>
    <property type="project" value="UniProtKB-SubCell"/>
</dbReference>
<dbReference type="GO" id="GO:0046872">
    <property type="term" value="F:metal ion binding"/>
    <property type="evidence" value="ECO:0007669"/>
    <property type="project" value="UniProtKB-KW"/>
</dbReference>
<dbReference type="GO" id="GO:0008235">
    <property type="term" value="F:metalloexopeptidase activity"/>
    <property type="evidence" value="ECO:0007669"/>
    <property type="project" value="InterPro"/>
</dbReference>
<dbReference type="GO" id="GO:0006508">
    <property type="term" value="P:proteolysis"/>
    <property type="evidence" value="ECO:0000318"/>
    <property type="project" value="GO_Central"/>
</dbReference>
<dbReference type="CDD" id="cd00063">
    <property type="entry name" value="FN3"/>
    <property type="match status" value="1"/>
</dbReference>
<dbReference type="CDD" id="cd05642">
    <property type="entry name" value="M28_like"/>
    <property type="match status" value="1"/>
</dbReference>
<dbReference type="Gene3D" id="2.60.40.10">
    <property type="entry name" value="Immunoglobulins"/>
    <property type="match status" value="1"/>
</dbReference>
<dbReference type="Gene3D" id="3.40.630.10">
    <property type="entry name" value="Zn peptidases"/>
    <property type="match status" value="1"/>
</dbReference>
<dbReference type="InterPro" id="IPR003961">
    <property type="entry name" value="FN3_dom"/>
</dbReference>
<dbReference type="InterPro" id="IPR036116">
    <property type="entry name" value="FN3_sf"/>
</dbReference>
<dbReference type="InterPro" id="IPR013783">
    <property type="entry name" value="Ig-like_fold"/>
</dbReference>
<dbReference type="InterPro" id="IPR045175">
    <property type="entry name" value="M28_fam"/>
</dbReference>
<dbReference type="InterPro" id="IPR007484">
    <property type="entry name" value="Peptidase_M28"/>
</dbReference>
<dbReference type="PANTHER" id="PTHR12147">
    <property type="entry name" value="METALLOPEPTIDASE M28 FAMILY MEMBER"/>
    <property type="match status" value="1"/>
</dbReference>
<dbReference type="PANTHER" id="PTHR12147:SF26">
    <property type="entry name" value="PEPTIDASE M28 DOMAIN-CONTAINING PROTEIN"/>
    <property type="match status" value="1"/>
</dbReference>
<dbReference type="Pfam" id="PF04389">
    <property type="entry name" value="Peptidase_M28"/>
    <property type="match status" value="1"/>
</dbReference>
<dbReference type="SUPFAM" id="SSF49265">
    <property type="entry name" value="Fibronectin type III"/>
    <property type="match status" value="1"/>
</dbReference>
<dbReference type="SUPFAM" id="SSF53187">
    <property type="entry name" value="Zn-dependent exopeptidases"/>
    <property type="match status" value="1"/>
</dbReference>
<dbReference type="PROSITE" id="PS50853">
    <property type="entry name" value="FN3"/>
    <property type="match status" value="1"/>
</dbReference>
<protein>
    <recommendedName>
        <fullName>Probable zinc metalloprotease SNOG_06590</fullName>
        <ecNumber>3.4.-.-</ecNumber>
    </recommendedName>
</protein>
<evidence type="ECO:0000250" key="1"/>
<evidence type="ECO:0000255" key="2"/>
<evidence type="ECO:0000255" key="3">
    <source>
        <dbReference type="PROSITE-ProRule" id="PRU00316"/>
    </source>
</evidence>
<evidence type="ECO:0000305" key="4"/>
<proteinExistence type="inferred from homology"/>
<gene>
    <name type="ORF">SNOG_06590</name>
</gene>
<accession>Q0UNS4</accession>
<keyword id="KW-0325">Glycoprotein</keyword>
<keyword id="KW-0378">Hydrolase</keyword>
<keyword id="KW-0479">Metal-binding</keyword>
<keyword id="KW-0482">Metalloprotease</keyword>
<keyword id="KW-0645">Protease</keyword>
<keyword id="KW-0964">Secreted</keyword>
<keyword id="KW-0732">Signal</keyword>
<keyword id="KW-0862">Zinc</keyword>
<feature type="signal peptide" evidence="2">
    <location>
        <begin position="1"/>
        <end position="20"/>
    </location>
</feature>
<feature type="chain" id="PRO_0000411766" description="Probable zinc metalloprotease SNOG_06590">
    <location>
        <begin position="21"/>
        <end position="496"/>
    </location>
</feature>
<feature type="domain" description="Fibronectin type-III" evidence="3">
    <location>
        <begin position="402"/>
        <end position="496"/>
    </location>
</feature>
<feature type="binding site" evidence="1">
    <location>
        <position position="161"/>
    </location>
    <ligand>
        <name>Zn(2+)</name>
        <dbReference type="ChEBI" id="CHEBI:29105"/>
        <label>1</label>
    </ligand>
</feature>
<feature type="binding site" evidence="1">
    <location>
        <position position="181"/>
    </location>
    <ligand>
        <name>Zn(2+)</name>
        <dbReference type="ChEBI" id="CHEBI:29105"/>
        <label>1</label>
    </ligand>
</feature>
<feature type="binding site" evidence="1">
    <location>
        <position position="181"/>
    </location>
    <ligand>
        <name>Zn(2+)</name>
        <dbReference type="ChEBI" id="CHEBI:29105"/>
        <label>2</label>
        <note>catalytic</note>
    </ligand>
</feature>
<feature type="binding site" evidence="1">
    <location>
        <position position="226"/>
    </location>
    <ligand>
        <name>Zn(2+)</name>
        <dbReference type="ChEBI" id="CHEBI:29105"/>
        <label>2</label>
        <note>catalytic</note>
    </ligand>
</feature>
<feature type="binding site" evidence="1">
    <location>
        <position position="253"/>
    </location>
    <ligand>
        <name>Zn(2+)</name>
        <dbReference type="ChEBI" id="CHEBI:29105"/>
        <label>1</label>
    </ligand>
</feature>
<feature type="glycosylation site" description="N-linked (GlcNAc...) asparagine" evidence="2">
    <location>
        <position position="138"/>
    </location>
</feature>
<feature type="glycosylation site" description="N-linked (GlcNAc...) asparagine" evidence="2">
    <location>
        <position position="241"/>
    </location>
</feature>
<feature type="glycosylation site" description="N-linked (GlcNAc...) asparagine" evidence="2">
    <location>
        <position position="282"/>
    </location>
</feature>
<feature type="glycosylation site" description="N-linked (GlcNAc...) asparagine" evidence="2">
    <location>
        <position position="361"/>
    </location>
</feature>
<feature type="glycosylation site" description="N-linked (GlcNAc...) asparagine" evidence="2">
    <location>
        <position position="409"/>
    </location>
</feature>
<feature type="glycosylation site" description="N-linked (GlcNAc...) asparagine" evidence="2">
    <location>
        <position position="415"/>
    </location>
</feature>
<feature type="glycosylation site" description="N-linked (GlcNAc...) asparagine" evidence="2">
    <location>
        <position position="457"/>
    </location>
</feature>
<organism>
    <name type="scientific">Phaeosphaeria nodorum (strain SN15 / ATCC MYA-4574 / FGSC 10173)</name>
    <name type="common">Glume blotch fungus</name>
    <name type="synonym">Parastagonospora nodorum</name>
    <dbReference type="NCBI Taxonomy" id="321614"/>
    <lineage>
        <taxon>Eukaryota</taxon>
        <taxon>Fungi</taxon>
        <taxon>Dikarya</taxon>
        <taxon>Ascomycota</taxon>
        <taxon>Pezizomycotina</taxon>
        <taxon>Dothideomycetes</taxon>
        <taxon>Pleosporomycetidae</taxon>
        <taxon>Pleosporales</taxon>
        <taxon>Pleosporineae</taxon>
        <taxon>Phaeosphaeriaceae</taxon>
        <taxon>Parastagonospora</taxon>
    </lineage>
</organism>
<reference key="1">
    <citation type="journal article" date="2007" name="Plant Cell">
        <title>Dothideomycete-plant interactions illuminated by genome sequencing and EST analysis of the wheat pathogen Stagonospora nodorum.</title>
        <authorList>
            <person name="Hane J.K."/>
            <person name="Lowe R.G.T."/>
            <person name="Solomon P.S."/>
            <person name="Tan K.-C."/>
            <person name="Schoch C.L."/>
            <person name="Spatafora J.W."/>
            <person name="Crous P.W."/>
            <person name="Kodira C.D."/>
            <person name="Birren B.W."/>
            <person name="Galagan J.E."/>
            <person name="Torriani S.F.F."/>
            <person name="McDonald B.A."/>
            <person name="Oliver R.P."/>
        </authorList>
    </citation>
    <scope>NUCLEOTIDE SEQUENCE [LARGE SCALE GENOMIC DNA]</scope>
    <source>
        <strain>SN15 / ATCC MYA-4574 / FGSC 10173</strain>
    </source>
</reference>
<comment type="cofactor">
    <cofactor evidence="1">
        <name>Zn(2+)</name>
        <dbReference type="ChEBI" id="CHEBI:29105"/>
    </cofactor>
    <text evidence="1">Binds 2 Zn(2+) ions per subunit.</text>
</comment>
<comment type="subcellular location">
    <subcellularLocation>
        <location evidence="4">Secreted</location>
    </subcellularLocation>
</comment>
<comment type="similarity">
    <text evidence="4">Belongs to the peptidase M28 family. M28B subfamily.</text>
</comment>
<sequence length="496" mass="54820">MRSSMFFAVCAAAALQTALSSPIHPRHAHQSFPNTEQWPIATVGKALKQQLPDEELQGILSQVSQDNIEATIRKLASFGTRHTLSSQTDPARGIGAARTWLTEQFQEAADASEGRMTVDWNSFVKYPGDNERIIFPVNITNIVTTLKGSEDPDRLYVTGGHYDSRNSNPIDYQGDAPGAVDVSNSCYTNWVWEDASGVAVSLELARIFAKYQPKTTIVFTAFAGEEQGLLGAENLAQTYKNNSVNVAGMINLDMVGNSKAEDGTSDPYNIRLFCQGTPLTENSTTTTSRLSIGGDNDSPARNLGRHIYEVASNAFTEMTVRLIYRLDRYSRGGDHRPFLEAGYTGVRFVQPNEDYTQQHQNVTVRNGKQYGDLVEWLDFEYNTRAAKVVASTMWSLANAPGEPMNVGINTTTSDNFSQFKWTAPKGLPVEGYEIVYRETLEPHWTSVIEVGDVNWYNLTSATIHKDNVIFGVRSVGKGGYRSPAVLPFPFGCTRNC</sequence>
<name>M28P3_PHANO</name>